<accession>Q1LNG5</accession>
<feature type="chain" id="PRO_0000313388" description="DNA ligase">
    <location>
        <begin position="1"/>
        <end position="721"/>
    </location>
</feature>
<feature type="domain" description="BRCT" evidence="1">
    <location>
        <begin position="639"/>
        <end position="721"/>
    </location>
</feature>
<feature type="region of interest" description="Disordered" evidence="2">
    <location>
        <begin position="1"/>
        <end position="23"/>
    </location>
</feature>
<feature type="compositionally biased region" description="Low complexity" evidence="2">
    <location>
        <begin position="1"/>
        <end position="19"/>
    </location>
</feature>
<feature type="active site" description="N6-AMP-lysine intermediate" evidence="1">
    <location>
        <position position="164"/>
    </location>
</feature>
<feature type="binding site" evidence="1">
    <location>
        <begin position="48"/>
        <end position="52"/>
    </location>
    <ligand>
        <name>NAD(+)</name>
        <dbReference type="ChEBI" id="CHEBI:57540"/>
    </ligand>
</feature>
<feature type="binding site" evidence="1">
    <location>
        <begin position="97"/>
        <end position="98"/>
    </location>
    <ligand>
        <name>NAD(+)</name>
        <dbReference type="ChEBI" id="CHEBI:57540"/>
    </ligand>
</feature>
<feature type="binding site" evidence="1">
    <location>
        <position position="162"/>
    </location>
    <ligand>
        <name>NAD(+)</name>
        <dbReference type="ChEBI" id="CHEBI:57540"/>
    </ligand>
</feature>
<feature type="binding site" evidence="1">
    <location>
        <position position="185"/>
    </location>
    <ligand>
        <name>NAD(+)</name>
        <dbReference type="ChEBI" id="CHEBI:57540"/>
    </ligand>
</feature>
<feature type="binding site" evidence="1">
    <location>
        <position position="221"/>
    </location>
    <ligand>
        <name>NAD(+)</name>
        <dbReference type="ChEBI" id="CHEBI:57540"/>
    </ligand>
</feature>
<feature type="binding site" evidence="1">
    <location>
        <position position="338"/>
    </location>
    <ligand>
        <name>NAD(+)</name>
        <dbReference type="ChEBI" id="CHEBI:57540"/>
    </ligand>
</feature>
<feature type="binding site" evidence="1">
    <location>
        <position position="362"/>
    </location>
    <ligand>
        <name>NAD(+)</name>
        <dbReference type="ChEBI" id="CHEBI:57540"/>
    </ligand>
</feature>
<feature type="binding site" evidence="1">
    <location>
        <position position="456"/>
    </location>
    <ligand>
        <name>Zn(2+)</name>
        <dbReference type="ChEBI" id="CHEBI:29105"/>
    </ligand>
</feature>
<feature type="binding site" evidence="1">
    <location>
        <position position="459"/>
    </location>
    <ligand>
        <name>Zn(2+)</name>
        <dbReference type="ChEBI" id="CHEBI:29105"/>
    </ligand>
</feature>
<feature type="binding site" evidence="1">
    <location>
        <position position="474"/>
    </location>
    <ligand>
        <name>Zn(2+)</name>
        <dbReference type="ChEBI" id="CHEBI:29105"/>
    </ligand>
</feature>
<feature type="binding site" evidence="1">
    <location>
        <position position="480"/>
    </location>
    <ligand>
        <name>Zn(2+)</name>
        <dbReference type="ChEBI" id="CHEBI:29105"/>
    </ligand>
</feature>
<dbReference type="EC" id="6.5.1.2" evidence="1"/>
<dbReference type="EMBL" id="CP000352">
    <property type="protein sequence ID" value="ABF08311.1"/>
    <property type="molecule type" value="Genomic_DNA"/>
</dbReference>
<dbReference type="RefSeq" id="WP_011516179.1">
    <property type="nucleotide sequence ID" value="NC_007973.1"/>
</dbReference>
<dbReference type="SMR" id="Q1LNG5"/>
<dbReference type="STRING" id="266264.Rmet_1428"/>
<dbReference type="KEGG" id="rme:Rmet_1428"/>
<dbReference type="eggNOG" id="COG0272">
    <property type="taxonomic scope" value="Bacteria"/>
</dbReference>
<dbReference type="HOGENOM" id="CLU_007764_2_1_4"/>
<dbReference type="Proteomes" id="UP000002429">
    <property type="component" value="Chromosome"/>
</dbReference>
<dbReference type="GO" id="GO:0005829">
    <property type="term" value="C:cytosol"/>
    <property type="evidence" value="ECO:0007669"/>
    <property type="project" value="TreeGrafter"/>
</dbReference>
<dbReference type="GO" id="GO:0003677">
    <property type="term" value="F:DNA binding"/>
    <property type="evidence" value="ECO:0007669"/>
    <property type="project" value="InterPro"/>
</dbReference>
<dbReference type="GO" id="GO:0003911">
    <property type="term" value="F:DNA ligase (NAD+) activity"/>
    <property type="evidence" value="ECO:0007669"/>
    <property type="project" value="UniProtKB-UniRule"/>
</dbReference>
<dbReference type="GO" id="GO:0046872">
    <property type="term" value="F:metal ion binding"/>
    <property type="evidence" value="ECO:0007669"/>
    <property type="project" value="UniProtKB-KW"/>
</dbReference>
<dbReference type="GO" id="GO:0006281">
    <property type="term" value="P:DNA repair"/>
    <property type="evidence" value="ECO:0007669"/>
    <property type="project" value="UniProtKB-KW"/>
</dbReference>
<dbReference type="GO" id="GO:0006260">
    <property type="term" value="P:DNA replication"/>
    <property type="evidence" value="ECO:0007669"/>
    <property type="project" value="UniProtKB-KW"/>
</dbReference>
<dbReference type="CDD" id="cd17748">
    <property type="entry name" value="BRCT_DNA_ligase_like"/>
    <property type="match status" value="1"/>
</dbReference>
<dbReference type="CDD" id="cd00114">
    <property type="entry name" value="LIGANc"/>
    <property type="match status" value="1"/>
</dbReference>
<dbReference type="FunFam" id="1.10.150.20:FF:000006">
    <property type="entry name" value="DNA ligase"/>
    <property type="match status" value="1"/>
</dbReference>
<dbReference type="FunFam" id="1.10.150.20:FF:000007">
    <property type="entry name" value="DNA ligase"/>
    <property type="match status" value="1"/>
</dbReference>
<dbReference type="FunFam" id="1.10.287.610:FF:000002">
    <property type="entry name" value="DNA ligase"/>
    <property type="match status" value="1"/>
</dbReference>
<dbReference type="FunFam" id="2.40.50.140:FF:000012">
    <property type="entry name" value="DNA ligase"/>
    <property type="match status" value="1"/>
</dbReference>
<dbReference type="FunFam" id="3.30.470.30:FF:000001">
    <property type="entry name" value="DNA ligase"/>
    <property type="match status" value="1"/>
</dbReference>
<dbReference type="FunFam" id="3.40.50.10190:FF:000054">
    <property type="entry name" value="DNA ligase"/>
    <property type="match status" value="1"/>
</dbReference>
<dbReference type="FunFam" id="6.20.10.30:FF:000001">
    <property type="entry name" value="DNA ligase"/>
    <property type="match status" value="1"/>
</dbReference>
<dbReference type="Gene3D" id="6.20.10.30">
    <property type="match status" value="1"/>
</dbReference>
<dbReference type="Gene3D" id="1.10.150.20">
    <property type="entry name" value="5' to 3' exonuclease, C-terminal subdomain"/>
    <property type="match status" value="2"/>
</dbReference>
<dbReference type="Gene3D" id="3.40.50.10190">
    <property type="entry name" value="BRCT domain"/>
    <property type="match status" value="1"/>
</dbReference>
<dbReference type="Gene3D" id="3.30.470.30">
    <property type="entry name" value="DNA ligase/mRNA capping enzyme"/>
    <property type="match status" value="1"/>
</dbReference>
<dbReference type="Gene3D" id="1.10.287.610">
    <property type="entry name" value="Helix hairpin bin"/>
    <property type="match status" value="1"/>
</dbReference>
<dbReference type="Gene3D" id="2.40.50.140">
    <property type="entry name" value="Nucleic acid-binding proteins"/>
    <property type="match status" value="1"/>
</dbReference>
<dbReference type="HAMAP" id="MF_01588">
    <property type="entry name" value="DNA_ligase_A"/>
    <property type="match status" value="1"/>
</dbReference>
<dbReference type="InterPro" id="IPR001357">
    <property type="entry name" value="BRCT_dom"/>
</dbReference>
<dbReference type="InterPro" id="IPR036420">
    <property type="entry name" value="BRCT_dom_sf"/>
</dbReference>
<dbReference type="InterPro" id="IPR041663">
    <property type="entry name" value="DisA/LigA_HHH"/>
</dbReference>
<dbReference type="InterPro" id="IPR001679">
    <property type="entry name" value="DNA_ligase"/>
</dbReference>
<dbReference type="InterPro" id="IPR018239">
    <property type="entry name" value="DNA_ligase_AS"/>
</dbReference>
<dbReference type="InterPro" id="IPR033136">
    <property type="entry name" value="DNA_ligase_CS"/>
</dbReference>
<dbReference type="InterPro" id="IPR013839">
    <property type="entry name" value="DNAligase_adenylation"/>
</dbReference>
<dbReference type="InterPro" id="IPR013840">
    <property type="entry name" value="DNAligase_N"/>
</dbReference>
<dbReference type="InterPro" id="IPR003583">
    <property type="entry name" value="Hlx-hairpin-Hlx_DNA-bd_motif"/>
</dbReference>
<dbReference type="InterPro" id="IPR012340">
    <property type="entry name" value="NA-bd_OB-fold"/>
</dbReference>
<dbReference type="InterPro" id="IPR004150">
    <property type="entry name" value="NAD_DNA_ligase_OB"/>
</dbReference>
<dbReference type="InterPro" id="IPR010994">
    <property type="entry name" value="RuvA_2-like"/>
</dbReference>
<dbReference type="InterPro" id="IPR004149">
    <property type="entry name" value="Znf_DNAligase_C4"/>
</dbReference>
<dbReference type="NCBIfam" id="TIGR00575">
    <property type="entry name" value="dnlj"/>
    <property type="match status" value="1"/>
</dbReference>
<dbReference type="NCBIfam" id="NF005932">
    <property type="entry name" value="PRK07956.1"/>
    <property type="match status" value="1"/>
</dbReference>
<dbReference type="PANTHER" id="PTHR23389">
    <property type="entry name" value="CHROMOSOME TRANSMISSION FIDELITY FACTOR 18"/>
    <property type="match status" value="1"/>
</dbReference>
<dbReference type="PANTHER" id="PTHR23389:SF9">
    <property type="entry name" value="DNA LIGASE"/>
    <property type="match status" value="1"/>
</dbReference>
<dbReference type="Pfam" id="PF00533">
    <property type="entry name" value="BRCT"/>
    <property type="match status" value="1"/>
</dbReference>
<dbReference type="Pfam" id="PF01653">
    <property type="entry name" value="DNA_ligase_aden"/>
    <property type="match status" value="1"/>
</dbReference>
<dbReference type="Pfam" id="PF03120">
    <property type="entry name" value="DNA_ligase_OB"/>
    <property type="match status" value="1"/>
</dbReference>
<dbReference type="Pfam" id="PF03119">
    <property type="entry name" value="DNA_ligase_ZBD"/>
    <property type="match status" value="1"/>
</dbReference>
<dbReference type="Pfam" id="PF12826">
    <property type="entry name" value="HHH_2"/>
    <property type="match status" value="1"/>
</dbReference>
<dbReference type="Pfam" id="PF14520">
    <property type="entry name" value="HHH_5"/>
    <property type="match status" value="1"/>
</dbReference>
<dbReference type="Pfam" id="PF22745">
    <property type="entry name" value="Nlig-Ia"/>
    <property type="match status" value="1"/>
</dbReference>
<dbReference type="PIRSF" id="PIRSF001604">
    <property type="entry name" value="LigA"/>
    <property type="match status" value="1"/>
</dbReference>
<dbReference type="SMART" id="SM00292">
    <property type="entry name" value="BRCT"/>
    <property type="match status" value="1"/>
</dbReference>
<dbReference type="SMART" id="SM00278">
    <property type="entry name" value="HhH1"/>
    <property type="match status" value="4"/>
</dbReference>
<dbReference type="SMART" id="SM00532">
    <property type="entry name" value="LIGANc"/>
    <property type="match status" value="1"/>
</dbReference>
<dbReference type="SUPFAM" id="SSF52113">
    <property type="entry name" value="BRCT domain"/>
    <property type="match status" value="1"/>
</dbReference>
<dbReference type="SUPFAM" id="SSF56091">
    <property type="entry name" value="DNA ligase/mRNA capping enzyme, catalytic domain"/>
    <property type="match status" value="1"/>
</dbReference>
<dbReference type="SUPFAM" id="SSF50249">
    <property type="entry name" value="Nucleic acid-binding proteins"/>
    <property type="match status" value="1"/>
</dbReference>
<dbReference type="SUPFAM" id="SSF47781">
    <property type="entry name" value="RuvA domain 2-like"/>
    <property type="match status" value="1"/>
</dbReference>
<dbReference type="PROSITE" id="PS50172">
    <property type="entry name" value="BRCT"/>
    <property type="match status" value="1"/>
</dbReference>
<dbReference type="PROSITE" id="PS01055">
    <property type="entry name" value="DNA_LIGASE_N1"/>
    <property type="match status" value="1"/>
</dbReference>
<dbReference type="PROSITE" id="PS01056">
    <property type="entry name" value="DNA_LIGASE_N2"/>
    <property type="match status" value="1"/>
</dbReference>
<keyword id="KW-0227">DNA damage</keyword>
<keyword id="KW-0234">DNA repair</keyword>
<keyword id="KW-0235">DNA replication</keyword>
<keyword id="KW-0436">Ligase</keyword>
<keyword id="KW-0460">Magnesium</keyword>
<keyword id="KW-0464">Manganese</keyword>
<keyword id="KW-0479">Metal-binding</keyword>
<keyword id="KW-0520">NAD</keyword>
<keyword id="KW-1185">Reference proteome</keyword>
<keyword id="KW-0862">Zinc</keyword>
<protein>
    <recommendedName>
        <fullName evidence="1">DNA ligase</fullName>
        <ecNumber evidence="1">6.5.1.2</ecNumber>
    </recommendedName>
    <alternativeName>
        <fullName evidence="1">Polydeoxyribonucleotide synthase [NAD(+)]</fullName>
    </alternativeName>
</protein>
<gene>
    <name evidence="1" type="primary">ligA</name>
    <name type="ordered locus">Rmet_1428</name>
</gene>
<proteinExistence type="inferred from homology"/>
<evidence type="ECO:0000255" key="1">
    <source>
        <dbReference type="HAMAP-Rule" id="MF_01588"/>
    </source>
</evidence>
<evidence type="ECO:0000256" key="2">
    <source>
        <dbReference type="SAM" id="MobiDB-lite"/>
    </source>
</evidence>
<comment type="function">
    <text evidence="1">DNA ligase that catalyzes the formation of phosphodiester linkages between 5'-phosphoryl and 3'-hydroxyl groups in double-stranded DNA using NAD as a coenzyme and as the energy source for the reaction. It is essential for DNA replication and repair of damaged DNA.</text>
</comment>
<comment type="catalytic activity">
    <reaction evidence="1">
        <text>NAD(+) + (deoxyribonucleotide)n-3'-hydroxyl + 5'-phospho-(deoxyribonucleotide)m = (deoxyribonucleotide)n+m + AMP + beta-nicotinamide D-nucleotide.</text>
        <dbReference type="EC" id="6.5.1.2"/>
    </reaction>
</comment>
<comment type="cofactor">
    <cofactor evidence="1">
        <name>Mg(2+)</name>
        <dbReference type="ChEBI" id="CHEBI:18420"/>
    </cofactor>
    <cofactor evidence="1">
        <name>Mn(2+)</name>
        <dbReference type="ChEBI" id="CHEBI:29035"/>
    </cofactor>
</comment>
<comment type="similarity">
    <text evidence="1">Belongs to the NAD-dependent DNA ligase family. LigA subfamily.</text>
</comment>
<organism>
    <name type="scientific">Cupriavidus metallidurans (strain ATCC 43123 / DSM 2839 / NBRC 102507 / CH34)</name>
    <name type="common">Ralstonia metallidurans</name>
    <dbReference type="NCBI Taxonomy" id="266264"/>
    <lineage>
        <taxon>Bacteria</taxon>
        <taxon>Pseudomonadati</taxon>
        <taxon>Pseudomonadota</taxon>
        <taxon>Betaproteobacteria</taxon>
        <taxon>Burkholderiales</taxon>
        <taxon>Burkholderiaceae</taxon>
        <taxon>Cupriavidus</taxon>
    </lineage>
</organism>
<sequence length="721" mass="77306">MTAKKQGAQASASAPSGDSPAERAQWLREELERYSYQYYVLDAPTIPDADYDALFIELQALEAEHPELLTPDSPTQRVGGAPLSAFDSVRHRVPMLSLNNGFEDEDVINFDRRCAQGLGRATAAAPAAFATPAAPADDLFSAADAAEAAANTAGNAVEYACELKFDGLAMSLRYENGTLVQAATRGDGETGEDVTANVRTIKAIPLKLRGTAPSVLEVRGEVFMYRADFDKLNARQAESGEKTFVNPRNAAAGSLRQLDPRITAKRPLSFFAYGVGEMEGFDRPGTHSAMLDGFAKLGLPVCDERRVVRGAQGLLSFHREVGERRDQLPYDIDGVVYKVNAIAEQEQLGFVSRAPRFALAHKFPAQEMTTTVEDIEVQVGRTGAITPVARLAPVFVGGVTVTNATLHNEDEIRRKDVHIGDTVIVRRAGDVIPEVVAVVLERRPADARAFVMPTECPVCGSHVERLEGEAIARCTGGLICAAQRKQALLHFAQRRAMDIEGLGDKVVEQLVDLGIVRTPADLYKLGVAKLAALDRMADKSASNLVAAIEQSRETTMNRFIFALGIRHVGEATAKDLAKHFGKLDNLLAADEAALLEVNDVGPVVAQSIANFIAEPHNVEVIEQLRAAGVHWAETEPTARAPLPLAGKTFVLTGTLPTMSREDAKEKLEAAGAKVAGSVSKKTDYVVAGAEAGSKLEKAQTLGVAVLDEEGMLKLLAEVGAA</sequence>
<reference key="1">
    <citation type="journal article" date="2010" name="PLoS ONE">
        <title>The complete genome sequence of Cupriavidus metallidurans strain CH34, a master survivalist in harsh and anthropogenic environments.</title>
        <authorList>
            <person name="Janssen P.J."/>
            <person name="Van Houdt R."/>
            <person name="Moors H."/>
            <person name="Monsieurs P."/>
            <person name="Morin N."/>
            <person name="Michaux A."/>
            <person name="Benotmane M.A."/>
            <person name="Leys N."/>
            <person name="Vallaeys T."/>
            <person name="Lapidus A."/>
            <person name="Monchy S."/>
            <person name="Medigue C."/>
            <person name="Taghavi S."/>
            <person name="McCorkle S."/>
            <person name="Dunn J."/>
            <person name="van der Lelie D."/>
            <person name="Mergeay M."/>
        </authorList>
    </citation>
    <scope>NUCLEOTIDE SEQUENCE [LARGE SCALE GENOMIC DNA]</scope>
    <source>
        <strain>ATCC 43123 / DSM 2839 / NBRC 102507 / CH34</strain>
    </source>
</reference>
<name>DNLJ_CUPMC</name>